<keyword id="KW-0997">Cell inner membrane</keyword>
<keyword id="KW-1003">Cell membrane</keyword>
<keyword id="KW-0133">Cell shape</keyword>
<keyword id="KW-0961">Cell wall biogenesis/degradation</keyword>
<keyword id="KW-0328">Glycosyltransferase</keyword>
<keyword id="KW-0472">Membrane</keyword>
<keyword id="KW-0573">Peptidoglycan synthesis</keyword>
<keyword id="KW-1185">Reference proteome</keyword>
<keyword id="KW-0808">Transferase</keyword>
<keyword id="KW-0812">Transmembrane</keyword>
<keyword id="KW-1133">Transmembrane helix</keyword>
<gene>
    <name evidence="1" type="primary">mtgA</name>
    <name type="ordered locus">PA0378</name>
</gene>
<accession>Q9I6B7</accession>
<protein>
    <recommendedName>
        <fullName evidence="1">Biosynthetic peptidoglycan transglycosylase</fullName>
        <ecNumber evidence="1">2.4.99.28</ecNumber>
    </recommendedName>
    <alternativeName>
        <fullName evidence="1">Glycan polymerase</fullName>
    </alternativeName>
    <alternativeName>
        <fullName evidence="1">Peptidoglycan glycosyltransferase MtgA</fullName>
        <shortName evidence="1">PGT</shortName>
    </alternativeName>
</protein>
<proteinExistence type="inferred from homology"/>
<sequence length="232" mass="26547">MLRSLFRRLFKYLLWFMAASVVLVAVLRWVPPPGTMVMVERKVGSWVDGQPIDLQRDWRSWEQLPDSLKVAVIAGEDQHFAEHHGFDLPAIQQALAHNERGGSIRGASTLSQQVAKNVFLWSGRSWLRKGLEAWFTLLIETLWTKQRILEVYLNSAEWGPGVFGAQAAARYHFGLDAERLSRTQASQLAAVLPSPLKWSAARPGPYVRQRAAWIRQQMWQLGGDDYLLRLER</sequence>
<name>MTGA_PSEAE</name>
<reference key="1">
    <citation type="journal article" date="2000" name="Nature">
        <title>Complete genome sequence of Pseudomonas aeruginosa PAO1, an opportunistic pathogen.</title>
        <authorList>
            <person name="Stover C.K."/>
            <person name="Pham X.-Q.T."/>
            <person name="Erwin A.L."/>
            <person name="Mizoguchi S.D."/>
            <person name="Warrener P."/>
            <person name="Hickey M.J."/>
            <person name="Brinkman F.S.L."/>
            <person name="Hufnagle W.O."/>
            <person name="Kowalik D.J."/>
            <person name="Lagrou M."/>
            <person name="Garber R.L."/>
            <person name="Goltry L."/>
            <person name="Tolentino E."/>
            <person name="Westbrock-Wadman S."/>
            <person name="Yuan Y."/>
            <person name="Brody L.L."/>
            <person name="Coulter S.N."/>
            <person name="Folger K.R."/>
            <person name="Kas A."/>
            <person name="Larbig K."/>
            <person name="Lim R.M."/>
            <person name="Smith K.A."/>
            <person name="Spencer D.H."/>
            <person name="Wong G.K.-S."/>
            <person name="Wu Z."/>
            <person name="Paulsen I.T."/>
            <person name="Reizer J."/>
            <person name="Saier M.H. Jr."/>
            <person name="Hancock R.E.W."/>
            <person name="Lory S."/>
            <person name="Olson M.V."/>
        </authorList>
    </citation>
    <scope>NUCLEOTIDE SEQUENCE [LARGE SCALE GENOMIC DNA]</scope>
    <source>
        <strain>ATCC 15692 / DSM 22644 / CIP 104116 / JCM 14847 / LMG 12228 / 1C / PRS 101 / PAO1</strain>
    </source>
</reference>
<dbReference type="EC" id="2.4.99.28" evidence="1"/>
<dbReference type="EMBL" id="AE004091">
    <property type="protein sequence ID" value="AAG03767.1"/>
    <property type="status" value="ALT_INIT"/>
    <property type="molecule type" value="Genomic_DNA"/>
</dbReference>
<dbReference type="PIR" id="B83599">
    <property type="entry name" value="B83599"/>
</dbReference>
<dbReference type="RefSeq" id="NP_249069.1">
    <property type="nucleotide sequence ID" value="NC_002516.2"/>
</dbReference>
<dbReference type="SMR" id="Q9I6B7"/>
<dbReference type="FunCoup" id="Q9I6B7">
    <property type="interactions" value="221"/>
</dbReference>
<dbReference type="STRING" id="208964.PA0378"/>
<dbReference type="CAZy" id="GT51">
    <property type="family name" value="Glycosyltransferase Family 51"/>
</dbReference>
<dbReference type="PaxDb" id="208964-PA0378"/>
<dbReference type="DNASU" id="879835"/>
<dbReference type="GeneID" id="879835"/>
<dbReference type="KEGG" id="pae:PA0378"/>
<dbReference type="PATRIC" id="fig|208964.12.peg.398"/>
<dbReference type="PseudoCAP" id="PA0378"/>
<dbReference type="HOGENOM" id="CLU_006354_1_1_6"/>
<dbReference type="InParanoid" id="Q9I6B7"/>
<dbReference type="OrthoDB" id="9766909at2"/>
<dbReference type="PhylomeDB" id="Q9I6B7"/>
<dbReference type="UniPathway" id="UPA00219"/>
<dbReference type="Proteomes" id="UP000002438">
    <property type="component" value="Chromosome"/>
</dbReference>
<dbReference type="GO" id="GO:0009274">
    <property type="term" value="C:peptidoglycan-based cell wall"/>
    <property type="evidence" value="ECO:0007669"/>
    <property type="project" value="InterPro"/>
</dbReference>
<dbReference type="GO" id="GO:0005886">
    <property type="term" value="C:plasma membrane"/>
    <property type="evidence" value="ECO:0000318"/>
    <property type="project" value="GO_Central"/>
</dbReference>
<dbReference type="GO" id="GO:0016763">
    <property type="term" value="F:pentosyltransferase activity"/>
    <property type="evidence" value="ECO:0007669"/>
    <property type="project" value="InterPro"/>
</dbReference>
<dbReference type="GO" id="GO:0008955">
    <property type="term" value="F:peptidoglycan glycosyltransferase activity"/>
    <property type="evidence" value="ECO:0000318"/>
    <property type="project" value="GO_Central"/>
</dbReference>
<dbReference type="GO" id="GO:0071555">
    <property type="term" value="P:cell wall organization"/>
    <property type="evidence" value="ECO:0007669"/>
    <property type="project" value="UniProtKB-KW"/>
</dbReference>
<dbReference type="GO" id="GO:0009252">
    <property type="term" value="P:peptidoglycan biosynthetic process"/>
    <property type="evidence" value="ECO:0000318"/>
    <property type="project" value="GO_Central"/>
</dbReference>
<dbReference type="GO" id="GO:0008360">
    <property type="term" value="P:regulation of cell shape"/>
    <property type="evidence" value="ECO:0007669"/>
    <property type="project" value="UniProtKB-KW"/>
</dbReference>
<dbReference type="Gene3D" id="1.10.3810.10">
    <property type="entry name" value="Biosynthetic peptidoglycan transglycosylase-like"/>
    <property type="match status" value="1"/>
</dbReference>
<dbReference type="HAMAP" id="MF_00766">
    <property type="entry name" value="PGT_MtgA"/>
    <property type="match status" value="1"/>
</dbReference>
<dbReference type="InterPro" id="IPR001264">
    <property type="entry name" value="Glyco_trans_51"/>
</dbReference>
<dbReference type="InterPro" id="IPR023346">
    <property type="entry name" value="Lysozyme-like_dom_sf"/>
</dbReference>
<dbReference type="InterPro" id="IPR036950">
    <property type="entry name" value="PBP_transglycosylase"/>
</dbReference>
<dbReference type="InterPro" id="IPR011812">
    <property type="entry name" value="Pep_trsgly"/>
</dbReference>
<dbReference type="NCBIfam" id="TIGR02070">
    <property type="entry name" value="mono_pep_trsgly"/>
    <property type="match status" value="1"/>
</dbReference>
<dbReference type="PANTHER" id="PTHR30400:SF0">
    <property type="entry name" value="BIOSYNTHETIC PEPTIDOGLYCAN TRANSGLYCOSYLASE"/>
    <property type="match status" value="1"/>
</dbReference>
<dbReference type="PANTHER" id="PTHR30400">
    <property type="entry name" value="MONOFUNCTIONAL BIOSYNTHETIC PEPTIDOGLYCAN TRANSGLYCOSYLASE"/>
    <property type="match status" value="1"/>
</dbReference>
<dbReference type="Pfam" id="PF00912">
    <property type="entry name" value="Transgly"/>
    <property type="match status" value="1"/>
</dbReference>
<dbReference type="SUPFAM" id="SSF53955">
    <property type="entry name" value="Lysozyme-like"/>
    <property type="match status" value="1"/>
</dbReference>
<organism>
    <name type="scientific">Pseudomonas aeruginosa (strain ATCC 15692 / DSM 22644 / CIP 104116 / JCM 14847 / LMG 12228 / 1C / PRS 101 / PAO1)</name>
    <dbReference type="NCBI Taxonomy" id="208964"/>
    <lineage>
        <taxon>Bacteria</taxon>
        <taxon>Pseudomonadati</taxon>
        <taxon>Pseudomonadota</taxon>
        <taxon>Gammaproteobacteria</taxon>
        <taxon>Pseudomonadales</taxon>
        <taxon>Pseudomonadaceae</taxon>
        <taxon>Pseudomonas</taxon>
    </lineage>
</organism>
<evidence type="ECO:0000255" key="1">
    <source>
        <dbReference type="HAMAP-Rule" id="MF_00766"/>
    </source>
</evidence>
<evidence type="ECO:0000305" key="2"/>
<comment type="function">
    <text evidence="1">Peptidoglycan polymerase that catalyzes glycan chain elongation from lipid-linked precursors.</text>
</comment>
<comment type="catalytic activity">
    <reaction evidence="1">
        <text>[GlcNAc-(1-&gt;4)-Mur2Ac(oyl-L-Ala-gamma-D-Glu-L-Lys-D-Ala-D-Ala)](n)-di-trans,octa-cis-undecaprenyl diphosphate + beta-D-GlcNAc-(1-&gt;4)-Mur2Ac(oyl-L-Ala-gamma-D-Glu-L-Lys-D-Ala-D-Ala)-di-trans,octa-cis-undecaprenyl diphosphate = [GlcNAc-(1-&gt;4)-Mur2Ac(oyl-L-Ala-gamma-D-Glu-L-Lys-D-Ala-D-Ala)](n+1)-di-trans,octa-cis-undecaprenyl diphosphate + di-trans,octa-cis-undecaprenyl diphosphate + H(+)</text>
        <dbReference type="Rhea" id="RHEA:23708"/>
        <dbReference type="Rhea" id="RHEA-COMP:9602"/>
        <dbReference type="Rhea" id="RHEA-COMP:9603"/>
        <dbReference type="ChEBI" id="CHEBI:15378"/>
        <dbReference type="ChEBI" id="CHEBI:58405"/>
        <dbReference type="ChEBI" id="CHEBI:60033"/>
        <dbReference type="ChEBI" id="CHEBI:78435"/>
        <dbReference type="EC" id="2.4.99.28"/>
    </reaction>
</comment>
<comment type="pathway">
    <text evidence="1">Cell wall biogenesis; peptidoglycan biosynthesis.</text>
</comment>
<comment type="subcellular location">
    <subcellularLocation>
        <location evidence="1">Cell inner membrane</location>
        <topology evidence="1">Single-pass membrane protein</topology>
    </subcellularLocation>
</comment>
<comment type="similarity">
    <text evidence="1">Belongs to the glycosyltransferase 51 family.</text>
</comment>
<comment type="sequence caution" evidence="2">
    <conflict type="erroneous initiation">
        <sequence resource="EMBL-CDS" id="AAG03767"/>
    </conflict>
</comment>
<feature type="chain" id="PRO_0000083137" description="Biosynthetic peptidoglycan transglycosylase">
    <location>
        <begin position="1"/>
        <end position="232"/>
    </location>
</feature>
<feature type="transmembrane region" description="Helical" evidence="1">
    <location>
        <begin position="12"/>
        <end position="31"/>
    </location>
</feature>